<accession>Q7MFC4</accession>
<dbReference type="EC" id="7.5.2.1" evidence="1"/>
<dbReference type="EMBL" id="BA000038">
    <property type="protein sequence ID" value="BAC96422.1"/>
    <property type="molecule type" value="Genomic_DNA"/>
</dbReference>
<dbReference type="RefSeq" id="WP_011082430.1">
    <property type="nucleotide sequence ID" value="NC_005140.1"/>
</dbReference>
<dbReference type="SMR" id="Q7MFC4"/>
<dbReference type="STRING" id="672.VV93_v1c33830"/>
<dbReference type="GeneID" id="93898384"/>
<dbReference type="KEGG" id="vvy:VVA0396"/>
<dbReference type="eggNOG" id="COG3842">
    <property type="taxonomic scope" value="Bacteria"/>
</dbReference>
<dbReference type="HOGENOM" id="CLU_000604_1_1_6"/>
<dbReference type="Proteomes" id="UP000002675">
    <property type="component" value="Chromosome II"/>
</dbReference>
<dbReference type="GO" id="GO:0055052">
    <property type="term" value="C:ATP-binding cassette (ABC) transporter complex, substrate-binding subunit-containing"/>
    <property type="evidence" value="ECO:0007669"/>
    <property type="project" value="TreeGrafter"/>
</dbReference>
<dbReference type="GO" id="GO:1990060">
    <property type="term" value="C:maltose transport complex"/>
    <property type="evidence" value="ECO:0007669"/>
    <property type="project" value="TreeGrafter"/>
</dbReference>
<dbReference type="GO" id="GO:0015423">
    <property type="term" value="F:ABC-type maltose transporter activity"/>
    <property type="evidence" value="ECO:0007669"/>
    <property type="project" value="UniProtKB-EC"/>
</dbReference>
<dbReference type="GO" id="GO:0005524">
    <property type="term" value="F:ATP binding"/>
    <property type="evidence" value="ECO:0007669"/>
    <property type="project" value="UniProtKB-KW"/>
</dbReference>
<dbReference type="GO" id="GO:0016887">
    <property type="term" value="F:ATP hydrolysis activity"/>
    <property type="evidence" value="ECO:0007669"/>
    <property type="project" value="InterPro"/>
</dbReference>
<dbReference type="CDD" id="cd03301">
    <property type="entry name" value="ABC_MalK_N"/>
    <property type="match status" value="1"/>
</dbReference>
<dbReference type="FunFam" id="3.40.50.300:FF:000042">
    <property type="entry name" value="Maltose/maltodextrin ABC transporter, ATP-binding protein"/>
    <property type="match status" value="1"/>
</dbReference>
<dbReference type="FunFam" id="2.40.50.100:FF:000014">
    <property type="entry name" value="Maltose/maltodextrin import ATP-binding protein MalK"/>
    <property type="match status" value="1"/>
</dbReference>
<dbReference type="Gene3D" id="2.40.50.100">
    <property type="match status" value="1"/>
</dbReference>
<dbReference type="Gene3D" id="2.40.50.140">
    <property type="entry name" value="Nucleic acid-binding proteins"/>
    <property type="match status" value="1"/>
</dbReference>
<dbReference type="Gene3D" id="3.40.50.300">
    <property type="entry name" value="P-loop containing nucleotide triphosphate hydrolases"/>
    <property type="match status" value="1"/>
</dbReference>
<dbReference type="InterPro" id="IPR003593">
    <property type="entry name" value="AAA+_ATPase"/>
</dbReference>
<dbReference type="InterPro" id="IPR003439">
    <property type="entry name" value="ABC_transporter-like_ATP-bd"/>
</dbReference>
<dbReference type="InterPro" id="IPR017871">
    <property type="entry name" value="ABC_transporter-like_CS"/>
</dbReference>
<dbReference type="InterPro" id="IPR015855">
    <property type="entry name" value="ABC_transpr_MalK-like"/>
</dbReference>
<dbReference type="InterPro" id="IPR047641">
    <property type="entry name" value="ABC_transpr_MalK/UgpC-like"/>
</dbReference>
<dbReference type="InterPro" id="IPR008995">
    <property type="entry name" value="Mo/tungstate-bd_C_term_dom"/>
</dbReference>
<dbReference type="InterPro" id="IPR012340">
    <property type="entry name" value="NA-bd_OB-fold"/>
</dbReference>
<dbReference type="InterPro" id="IPR027417">
    <property type="entry name" value="P-loop_NTPase"/>
</dbReference>
<dbReference type="InterPro" id="IPR013611">
    <property type="entry name" value="Transp-assoc_OB_typ2"/>
</dbReference>
<dbReference type="NCBIfam" id="NF008233">
    <property type="entry name" value="PRK11000.1"/>
    <property type="match status" value="1"/>
</dbReference>
<dbReference type="NCBIfam" id="NF008653">
    <property type="entry name" value="PRK11650.1"/>
    <property type="match status" value="1"/>
</dbReference>
<dbReference type="PANTHER" id="PTHR43875">
    <property type="entry name" value="MALTODEXTRIN IMPORT ATP-BINDING PROTEIN MSMX"/>
    <property type="match status" value="1"/>
</dbReference>
<dbReference type="PANTHER" id="PTHR43875:SF3">
    <property type="entry name" value="MALTOSE_MALTODEXTRIN IMPORT ATP-BINDING PROTEIN MALK"/>
    <property type="match status" value="1"/>
</dbReference>
<dbReference type="Pfam" id="PF00005">
    <property type="entry name" value="ABC_tran"/>
    <property type="match status" value="1"/>
</dbReference>
<dbReference type="Pfam" id="PF08402">
    <property type="entry name" value="TOBE_2"/>
    <property type="match status" value="1"/>
</dbReference>
<dbReference type="SMART" id="SM00382">
    <property type="entry name" value="AAA"/>
    <property type="match status" value="1"/>
</dbReference>
<dbReference type="SUPFAM" id="SSF50331">
    <property type="entry name" value="MOP-like"/>
    <property type="match status" value="1"/>
</dbReference>
<dbReference type="SUPFAM" id="SSF52540">
    <property type="entry name" value="P-loop containing nucleoside triphosphate hydrolases"/>
    <property type="match status" value="1"/>
</dbReference>
<dbReference type="PROSITE" id="PS00211">
    <property type="entry name" value="ABC_TRANSPORTER_1"/>
    <property type="match status" value="1"/>
</dbReference>
<dbReference type="PROSITE" id="PS50893">
    <property type="entry name" value="ABC_TRANSPORTER_2"/>
    <property type="match status" value="1"/>
</dbReference>
<dbReference type="PROSITE" id="PS51245">
    <property type="entry name" value="MALK"/>
    <property type="match status" value="1"/>
</dbReference>
<protein>
    <recommendedName>
        <fullName evidence="1">Maltose/maltodextrin import ATP-binding protein MalK</fullName>
        <ecNumber evidence="1">7.5.2.1</ecNumber>
    </recommendedName>
</protein>
<evidence type="ECO:0000255" key="1">
    <source>
        <dbReference type="HAMAP-Rule" id="MF_01709"/>
    </source>
</evidence>
<sequence>MASVTLKNVCKAYGDVLISKNVDLEINEGEFVVFVGPSGCGKSTLLRCIAGLEDITSGDLYIGEERMNDVEPSKRGVGMVFQSYALYPHLNLYDNMSFGLKLAKADKKEIDKRVEQAAEILQLGHLLERLPKALSGGQRQRVAIGRTLVSQPKVFLLDEPLSNLDAALRVQMRAQITKLQRQLGCTMIYVTHDQVEAMTMADKIVVLDGGFVSQVGKPLELYHYPENRFVAGFIGSPKMNFMSVQIVDVESERVQVKLSNGVTFWVPVDGTTVNKGDRMSLGVRPEHLVSSAQGDAVIDGEVMIVEKLGNETQVYLNLESADADVIYRQPDTLDVDSGDRLEIGIPAHRCHLFHSDGRACKRLFNEKGVER</sequence>
<proteinExistence type="inferred from homology"/>
<organism>
    <name type="scientific">Vibrio vulnificus (strain YJ016)</name>
    <dbReference type="NCBI Taxonomy" id="196600"/>
    <lineage>
        <taxon>Bacteria</taxon>
        <taxon>Pseudomonadati</taxon>
        <taxon>Pseudomonadota</taxon>
        <taxon>Gammaproteobacteria</taxon>
        <taxon>Vibrionales</taxon>
        <taxon>Vibrionaceae</taxon>
        <taxon>Vibrio</taxon>
    </lineage>
</organism>
<comment type="function">
    <text evidence="1">Part of the ABC transporter complex MalEFGK involved in maltose/maltodextrin import. Responsible for energy coupling to the transport system.</text>
</comment>
<comment type="catalytic activity">
    <reaction evidence="1">
        <text>D-maltose(out) + ATP + H2O = D-maltose(in) + ADP + phosphate + H(+)</text>
        <dbReference type="Rhea" id="RHEA:22132"/>
        <dbReference type="ChEBI" id="CHEBI:15377"/>
        <dbReference type="ChEBI" id="CHEBI:15378"/>
        <dbReference type="ChEBI" id="CHEBI:17306"/>
        <dbReference type="ChEBI" id="CHEBI:30616"/>
        <dbReference type="ChEBI" id="CHEBI:43474"/>
        <dbReference type="ChEBI" id="CHEBI:456216"/>
        <dbReference type="EC" id="7.5.2.1"/>
    </reaction>
</comment>
<comment type="subunit">
    <text evidence="1">The complex is composed of two ATP-binding proteins (MalK), two transmembrane proteins (MalG and MalK) and a solute-binding protein (MalE).</text>
</comment>
<comment type="subcellular location">
    <subcellularLocation>
        <location evidence="1">Cell inner membrane</location>
        <topology evidence="1">Peripheral membrane protein</topology>
    </subcellularLocation>
</comment>
<comment type="similarity">
    <text evidence="1">Belongs to the ABC transporter superfamily. Maltooligosaccharide importer (TC 3.A.1.1.1) family.</text>
</comment>
<feature type="chain" id="PRO_0000092487" description="Maltose/maltodextrin import ATP-binding protein MalK">
    <location>
        <begin position="1"/>
        <end position="371"/>
    </location>
</feature>
<feature type="domain" description="ABC transporter" evidence="1">
    <location>
        <begin position="4"/>
        <end position="234"/>
    </location>
</feature>
<feature type="binding site" evidence="1">
    <location>
        <begin position="36"/>
        <end position="43"/>
    </location>
    <ligand>
        <name>ATP</name>
        <dbReference type="ChEBI" id="CHEBI:30616"/>
    </ligand>
</feature>
<keyword id="KW-0067">ATP-binding</keyword>
<keyword id="KW-0997">Cell inner membrane</keyword>
<keyword id="KW-1003">Cell membrane</keyword>
<keyword id="KW-0472">Membrane</keyword>
<keyword id="KW-0547">Nucleotide-binding</keyword>
<keyword id="KW-0762">Sugar transport</keyword>
<keyword id="KW-1278">Translocase</keyword>
<keyword id="KW-0813">Transport</keyword>
<gene>
    <name evidence="1" type="primary">malK</name>
    <name type="ordered locus">VVA0396</name>
</gene>
<name>MALK_VIBVY</name>
<reference key="1">
    <citation type="journal article" date="2003" name="Genome Res.">
        <title>Comparative genome analysis of Vibrio vulnificus, a marine pathogen.</title>
        <authorList>
            <person name="Chen C.-Y."/>
            <person name="Wu K.-M."/>
            <person name="Chang Y.-C."/>
            <person name="Chang C.-H."/>
            <person name="Tsai H.-C."/>
            <person name="Liao T.-L."/>
            <person name="Liu Y.-M."/>
            <person name="Chen H.-J."/>
            <person name="Shen A.B.-T."/>
            <person name="Li J.-C."/>
            <person name="Su T.-L."/>
            <person name="Shao C.-P."/>
            <person name="Lee C.-T."/>
            <person name="Hor L.-I."/>
            <person name="Tsai S.-F."/>
        </authorList>
    </citation>
    <scope>NUCLEOTIDE SEQUENCE [LARGE SCALE GENOMIC DNA]</scope>
    <source>
        <strain>YJ016</strain>
    </source>
</reference>